<organism>
    <name type="scientific">Rickettsia felis (strain ATCC VR-1525 / URRWXCal2)</name>
    <name type="common">Rickettsia azadi</name>
    <dbReference type="NCBI Taxonomy" id="315456"/>
    <lineage>
        <taxon>Bacteria</taxon>
        <taxon>Pseudomonadati</taxon>
        <taxon>Pseudomonadota</taxon>
        <taxon>Alphaproteobacteria</taxon>
        <taxon>Rickettsiales</taxon>
        <taxon>Rickettsiaceae</taxon>
        <taxon>Rickettsieae</taxon>
        <taxon>Rickettsia</taxon>
        <taxon>spotted fever group</taxon>
    </lineage>
</organism>
<sequence>MSSYKYYDLIRKPIITEKTTTLSEQNKYAFYVDKFAEKLTVKKAIEEIFKVKVKKVNILNVKGKKKRFKGIIGTQINRKKAIVTLEKDHNIDFAGGIK</sequence>
<protein>
    <recommendedName>
        <fullName evidence="1">Large ribosomal subunit protein uL23</fullName>
    </recommendedName>
    <alternativeName>
        <fullName evidence="2">50S ribosomal protein L23</fullName>
    </alternativeName>
</protein>
<name>RL23_RICFE</name>
<reference key="1">
    <citation type="journal article" date="2005" name="PLoS Biol.">
        <title>The genome sequence of Rickettsia felis identifies the first putative conjugative plasmid in an obligate intracellular parasite.</title>
        <authorList>
            <person name="Ogata H."/>
            <person name="Renesto P."/>
            <person name="Audic S."/>
            <person name="Robert C."/>
            <person name="Blanc G."/>
            <person name="Fournier P.-E."/>
            <person name="Parinello H."/>
            <person name="Claverie J.-M."/>
            <person name="Raoult D."/>
        </authorList>
    </citation>
    <scope>NUCLEOTIDE SEQUENCE [LARGE SCALE GENOMIC DNA]</scope>
    <source>
        <strain>ATCC VR-1525 / URRWXCal2</strain>
    </source>
</reference>
<feature type="chain" id="PRO_0000272830" description="Large ribosomal subunit protein uL23">
    <location>
        <begin position="1"/>
        <end position="98"/>
    </location>
</feature>
<comment type="function">
    <text evidence="1">One of the early assembly proteins it binds 23S rRNA. One of the proteins that surrounds the polypeptide exit tunnel on the outside of the ribosome. Forms the main docking site for trigger factor binding to the ribosome.</text>
</comment>
<comment type="subunit">
    <text evidence="1">Part of the 50S ribosomal subunit. Contacts protein L29, and trigger factor when it is bound to the ribosome.</text>
</comment>
<comment type="similarity">
    <text evidence="1">Belongs to the universal ribosomal protein uL23 family.</text>
</comment>
<gene>
    <name evidence="1" type="primary">rplW</name>
    <name type="ordered locus">RF_0280</name>
</gene>
<accession>Q4UMS7</accession>
<evidence type="ECO:0000255" key="1">
    <source>
        <dbReference type="HAMAP-Rule" id="MF_01369"/>
    </source>
</evidence>
<evidence type="ECO:0000305" key="2"/>
<dbReference type="EMBL" id="CP000053">
    <property type="protein sequence ID" value="AAY61131.1"/>
    <property type="molecule type" value="Genomic_DNA"/>
</dbReference>
<dbReference type="SMR" id="Q4UMS7"/>
<dbReference type="STRING" id="315456.RF_0280"/>
<dbReference type="KEGG" id="rfe:RF_0280"/>
<dbReference type="eggNOG" id="COG0089">
    <property type="taxonomic scope" value="Bacteria"/>
</dbReference>
<dbReference type="HOGENOM" id="CLU_037562_3_2_5"/>
<dbReference type="OrthoDB" id="9793353at2"/>
<dbReference type="Proteomes" id="UP000008548">
    <property type="component" value="Chromosome"/>
</dbReference>
<dbReference type="GO" id="GO:1990904">
    <property type="term" value="C:ribonucleoprotein complex"/>
    <property type="evidence" value="ECO:0007669"/>
    <property type="project" value="UniProtKB-KW"/>
</dbReference>
<dbReference type="GO" id="GO:0005840">
    <property type="term" value="C:ribosome"/>
    <property type="evidence" value="ECO:0007669"/>
    <property type="project" value="UniProtKB-KW"/>
</dbReference>
<dbReference type="GO" id="GO:0019843">
    <property type="term" value="F:rRNA binding"/>
    <property type="evidence" value="ECO:0007669"/>
    <property type="project" value="UniProtKB-UniRule"/>
</dbReference>
<dbReference type="GO" id="GO:0003735">
    <property type="term" value="F:structural constituent of ribosome"/>
    <property type="evidence" value="ECO:0007669"/>
    <property type="project" value="InterPro"/>
</dbReference>
<dbReference type="GO" id="GO:0006412">
    <property type="term" value="P:translation"/>
    <property type="evidence" value="ECO:0007669"/>
    <property type="project" value="UniProtKB-UniRule"/>
</dbReference>
<dbReference type="FunFam" id="3.30.70.330:FF:000001">
    <property type="entry name" value="50S ribosomal protein L23"/>
    <property type="match status" value="1"/>
</dbReference>
<dbReference type="Gene3D" id="3.30.70.330">
    <property type="match status" value="1"/>
</dbReference>
<dbReference type="HAMAP" id="MF_01369_B">
    <property type="entry name" value="Ribosomal_uL23_B"/>
    <property type="match status" value="1"/>
</dbReference>
<dbReference type="InterPro" id="IPR012677">
    <property type="entry name" value="Nucleotide-bd_a/b_plait_sf"/>
</dbReference>
<dbReference type="InterPro" id="IPR013025">
    <property type="entry name" value="Ribosomal_uL23-like"/>
</dbReference>
<dbReference type="InterPro" id="IPR012678">
    <property type="entry name" value="Ribosomal_uL23/eL15/eS24_sf"/>
</dbReference>
<dbReference type="NCBIfam" id="NF004359">
    <property type="entry name" value="PRK05738.1-3"/>
    <property type="match status" value="1"/>
</dbReference>
<dbReference type="NCBIfam" id="NF004363">
    <property type="entry name" value="PRK05738.2-4"/>
    <property type="match status" value="1"/>
</dbReference>
<dbReference type="PANTHER" id="PTHR11620">
    <property type="entry name" value="60S RIBOSOMAL PROTEIN L23A"/>
    <property type="match status" value="1"/>
</dbReference>
<dbReference type="Pfam" id="PF00276">
    <property type="entry name" value="Ribosomal_L23"/>
    <property type="match status" value="1"/>
</dbReference>
<dbReference type="SUPFAM" id="SSF54189">
    <property type="entry name" value="Ribosomal proteins S24e, L23 and L15e"/>
    <property type="match status" value="1"/>
</dbReference>
<proteinExistence type="inferred from homology"/>
<keyword id="KW-0687">Ribonucleoprotein</keyword>
<keyword id="KW-0689">Ribosomal protein</keyword>
<keyword id="KW-0694">RNA-binding</keyword>
<keyword id="KW-0699">rRNA-binding</keyword>